<organism>
    <name type="scientific">Staphylococcus haemolyticus (strain JCSC1435)</name>
    <dbReference type="NCBI Taxonomy" id="279808"/>
    <lineage>
        <taxon>Bacteria</taxon>
        <taxon>Bacillati</taxon>
        <taxon>Bacillota</taxon>
        <taxon>Bacilli</taxon>
        <taxon>Bacillales</taxon>
        <taxon>Staphylococcaceae</taxon>
        <taxon>Staphylococcus</taxon>
    </lineage>
</organism>
<gene>
    <name type="ordered locus">SH0748</name>
</gene>
<proteinExistence type="inferred from homology"/>
<comment type="catalytic activity">
    <reaction>
        <text>formate + NAD(+) = CO2 + NADH</text>
        <dbReference type="Rhea" id="RHEA:15985"/>
        <dbReference type="ChEBI" id="CHEBI:15740"/>
        <dbReference type="ChEBI" id="CHEBI:16526"/>
        <dbReference type="ChEBI" id="CHEBI:57540"/>
        <dbReference type="ChEBI" id="CHEBI:57945"/>
        <dbReference type="EC" id="1.17.1.9"/>
    </reaction>
</comment>
<comment type="cofactor">
    <cofactor evidence="1">
        <name>[2Fe-2S] cluster</name>
        <dbReference type="ChEBI" id="CHEBI:190135"/>
    </cofactor>
    <text evidence="1">Binds 1 [2Fe-2S] cluster.</text>
</comment>
<comment type="cofactor">
    <cofactor evidence="1">
        <name>[4Fe-4S] cluster</name>
        <dbReference type="ChEBI" id="CHEBI:49883"/>
    </cofactor>
    <text evidence="1">Binds 4 [4Fe-4S] clusters.</text>
</comment>
<comment type="cofactor">
    <cofactor evidence="1">
        <name>Mo-bis(molybdopterin guanine dinucleotide)</name>
        <dbReference type="ChEBI" id="CHEBI:60539"/>
    </cofactor>
    <text evidence="1">Binds 1 molybdenum-bis(molybdopterin guanine dinucleotide) (Mo-bis-MGD) cofactor per subunit.</text>
</comment>
<comment type="similarity">
    <text evidence="6">In the C-terminal section; belongs to the prokaryotic molybdopterin-containing oxidoreductase family.</text>
</comment>
<evidence type="ECO:0000250" key="1"/>
<evidence type="ECO:0000255" key="2">
    <source>
        <dbReference type="PROSITE-ProRule" id="PRU00465"/>
    </source>
</evidence>
<evidence type="ECO:0000255" key="3">
    <source>
        <dbReference type="PROSITE-ProRule" id="PRU00711"/>
    </source>
</evidence>
<evidence type="ECO:0000255" key="4">
    <source>
        <dbReference type="PROSITE-ProRule" id="PRU01004"/>
    </source>
</evidence>
<evidence type="ECO:0000255" key="5">
    <source>
        <dbReference type="PROSITE-ProRule" id="PRU01184"/>
    </source>
</evidence>
<evidence type="ECO:0000305" key="6"/>
<keyword id="KW-0001">2Fe-2S</keyword>
<keyword id="KW-0004">4Fe-4S</keyword>
<keyword id="KW-0408">Iron</keyword>
<keyword id="KW-0411">Iron-sulfur</keyword>
<keyword id="KW-0479">Metal-binding</keyword>
<keyword id="KW-0500">Molybdenum</keyword>
<keyword id="KW-0520">NAD</keyword>
<keyword id="KW-0560">Oxidoreductase</keyword>
<keyword id="KW-0677">Repeat</keyword>
<name>FDHL_STAHJ</name>
<sequence length="984" mass="110941">MQEHLIVTLDGTDYLVEPGTSLLEFIKSRDTFVPSICYNESMGPIQTCDTCMVEIDGKIERACSTVVNRPMTVNTQNNDVKASQKEALDRILEKHMLYCTVCDYNNGDCEIHNAMDAWGLEEQSYEYKTKPYEKDYGPFYRYDPDQCILCGRCVEACQDIEVNETISIDWNREHPRVIWDNDVPINESSCVSCGQCATVCPCNAMMEVNMEGNAGYMTDTEPGSLAAMIDLTKKAEPGDGLLFAVSDSEAEMRKERIKKTKTVCTYCGVGCSFDVWTKDREVLKVQPSHDSPANKIATCVKGKFSWGHINSDQRLTKPLVRKDGEFHEVEWDEALDVIETNFKRIKNEYGGDHLAFIASSKGTNEESYLMQKLSRQVFGSNNVDNCSRYCQAPATKGLFRTVGHGGDSGSIEDLERAAMTVLIGTNTAEAHPVIASRMKRAQKLFGQKMHVFDIRKHEMAARADAFYQPKPGTDLVWLGAATKYIIDNDLHDKAFLNDWVDNYEDYYKSLELFTMDFAEETTGIPKEQIISFAEEAAKAESMSICWAMGVTQQDIGSDTSTAISNLLLVTGNYRKPGSGAYPLRGHNNVQGASDMGSMPDQFPGYQKVADDEVRAKFEKEYGVELNPTPGRDNHQMMEGIHNGDIQSLYLYGEDTGIVDSNINFVQSALEKVDFLVVQDEFLTFTATYADVVLPASPSLEKDGTFTNTERRIQRINKALQPLGDSKPDWEIFQLIAQRMGADWNYKHPSEIMDEIAGLTPSYSGVNYERLQGFNSLQWPVAPDGTDQPTLYMDGFNFENGRAKLFPLTFDNFFKEDEVYDLHVNNGRLLEHFHEGNMTYQTEMIKYKVPNAFVEISPELAKDRDIHEGAELRLISETGEATLIATVTDRVKGREIYIPLNNDAMSNGDLGAINKLTNSDVDKYTDTPSYKRTSCRMEVLTRKGKSPLNPTNFRVDKQRNPQYSVQVQKKWERPDYVFPGNVVDK</sequence>
<reference key="1">
    <citation type="journal article" date="2005" name="J. Bacteriol.">
        <title>Whole-genome sequencing of Staphylococcus haemolyticus uncovers the extreme plasticity of its genome and the evolution of human-colonizing staphylococcal species.</title>
        <authorList>
            <person name="Takeuchi F."/>
            <person name="Watanabe S."/>
            <person name="Baba T."/>
            <person name="Yuzawa H."/>
            <person name="Ito T."/>
            <person name="Morimoto Y."/>
            <person name="Kuroda M."/>
            <person name="Cui L."/>
            <person name="Takahashi M."/>
            <person name="Ankai A."/>
            <person name="Baba S."/>
            <person name="Fukui S."/>
            <person name="Lee J.C."/>
            <person name="Hiramatsu K."/>
        </authorList>
    </citation>
    <scope>NUCLEOTIDE SEQUENCE [LARGE SCALE GENOMIC DNA]</scope>
    <source>
        <strain>JCSC1435</strain>
    </source>
</reference>
<protein>
    <recommendedName>
        <fullName>Putative formate dehydrogenase SH0748</fullName>
        <ecNumber>1.17.1.9</ecNumber>
    </recommendedName>
</protein>
<accession>Q4L8G8</accession>
<feature type="chain" id="PRO_0000304136" description="Putative formate dehydrogenase SH0748">
    <location>
        <begin position="1"/>
        <end position="984"/>
    </location>
</feature>
<feature type="domain" description="2Fe-2S ferredoxin-type" evidence="2">
    <location>
        <begin position="3"/>
        <end position="79"/>
    </location>
</feature>
<feature type="domain" description="4Fe-4S His(Cys)3-ligated-type" evidence="5">
    <location>
        <begin position="79"/>
        <end position="119"/>
    </location>
</feature>
<feature type="domain" description="4Fe-4S ferredoxin-type 1" evidence="3">
    <location>
        <begin position="138"/>
        <end position="165"/>
    </location>
</feature>
<feature type="domain" description="4Fe-4S ferredoxin-type 2" evidence="3">
    <location>
        <begin position="181"/>
        <end position="211"/>
    </location>
</feature>
<feature type="domain" description="4Fe-4S Mo/W bis-MGD-type" evidence="4">
    <location>
        <begin position="257"/>
        <end position="313"/>
    </location>
</feature>
<feature type="region of interest" description="Formate dehydrogenase">
    <location>
        <begin position="252"/>
        <end position="984"/>
    </location>
</feature>
<feature type="binding site" evidence="1">
    <location>
        <position position="37"/>
    </location>
    <ligand>
        <name>[2Fe-2S] cluster</name>
        <dbReference type="ChEBI" id="CHEBI:190135"/>
    </ligand>
</feature>
<feature type="binding site" evidence="1">
    <location>
        <position position="48"/>
    </location>
    <ligand>
        <name>[2Fe-2S] cluster</name>
        <dbReference type="ChEBI" id="CHEBI:190135"/>
    </ligand>
</feature>
<feature type="binding site" evidence="1">
    <location>
        <position position="51"/>
    </location>
    <ligand>
        <name>[2Fe-2S] cluster</name>
        <dbReference type="ChEBI" id="CHEBI:190135"/>
    </ligand>
</feature>
<feature type="binding site" evidence="1">
    <location>
        <position position="63"/>
    </location>
    <ligand>
        <name>[2Fe-2S] cluster</name>
        <dbReference type="ChEBI" id="CHEBI:190135"/>
    </ligand>
</feature>
<feature type="binding site" evidence="5">
    <location>
        <position position="95"/>
    </location>
    <ligand>
        <name>[4Fe-4S] cluster</name>
        <dbReference type="ChEBI" id="CHEBI:49883"/>
        <label>1</label>
    </ligand>
</feature>
<feature type="binding site" evidence="5">
    <location>
        <position position="99"/>
    </location>
    <ligand>
        <name>[4Fe-4S] cluster</name>
        <dbReference type="ChEBI" id="CHEBI:49883"/>
        <label>1</label>
    </ligand>
</feature>
<feature type="binding site" evidence="5">
    <location>
        <position position="102"/>
    </location>
    <ligand>
        <name>[4Fe-4S] cluster</name>
        <dbReference type="ChEBI" id="CHEBI:49883"/>
        <label>1</label>
    </ligand>
</feature>
<feature type="binding site" evidence="5">
    <location>
        <position position="109"/>
    </location>
    <ligand>
        <name>[4Fe-4S] cluster</name>
        <dbReference type="ChEBI" id="CHEBI:49883"/>
        <label>1</label>
    </ligand>
</feature>
<feature type="binding site" evidence="1">
    <location>
        <position position="147"/>
    </location>
    <ligand>
        <name>[4Fe-4S] cluster</name>
        <dbReference type="ChEBI" id="CHEBI:49883"/>
        <label>2</label>
    </ligand>
</feature>
<feature type="binding site" evidence="1">
    <location>
        <position position="150"/>
    </location>
    <ligand>
        <name>[4Fe-4S] cluster</name>
        <dbReference type="ChEBI" id="CHEBI:49883"/>
        <label>2</label>
    </ligand>
</feature>
<feature type="binding site" evidence="1">
    <location>
        <position position="153"/>
    </location>
    <ligand>
        <name>[4Fe-4S] cluster</name>
        <dbReference type="ChEBI" id="CHEBI:49883"/>
        <label>2</label>
    </ligand>
</feature>
<feature type="binding site" evidence="1">
    <location>
        <position position="157"/>
    </location>
    <ligand>
        <name>[4Fe-4S] cluster</name>
        <dbReference type="ChEBI" id="CHEBI:49883"/>
        <label>3</label>
    </ligand>
</feature>
<feature type="binding site" evidence="1">
    <location>
        <position position="190"/>
    </location>
    <ligand>
        <name>[4Fe-4S] cluster</name>
        <dbReference type="ChEBI" id="CHEBI:49883"/>
        <label>3</label>
    </ligand>
</feature>
<feature type="binding site" evidence="1">
    <location>
        <position position="193"/>
    </location>
    <ligand>
        <name>[4Fe-4S] cluster</name>
        <dbReference type="ChEBI" id="CHEBI:49883"/>
        <label>3</label>
    </ligand>
</feature>
<feature type="binding site" evidence="1">
    <location>
        <position position="196"/>
    </location>
    <ligand>
        <name>[4Fe-4S] cluster</name>
        <dbReference type="ChEBI" id="CHEBI:49883"/>
        <label>3</label>
    </ligand>
</feature>
<feature type="binding site" evidence="1">
    <location>
        <position position="200"/>
    </location>
    <ligand>
        <name>[4Fe-4S] cluster</name>
        <dbReference type="ChEBI" id="CHEBI:49883"/>
        <label>2</label>
    </ligand>
</feature>
<feature type="binding site" evidence="1">
    <location>
        <position position="264"/>
    </location>
    <ligand>
        <name>[4Fe-4S] cluster</name>
        <dbReference type="ChEBI" id="CHEBI:49883"/>
        <label>4</label>
    </ligand>
</feature>
<feature type="binding site" evidence="1">
    <location>
        <position position="267"/>
    </location>
    <ligand>
        <name>[4Fe-4S] cluster</name>
        <dbReference type="ChEBI" id="CHEBI:49883"/>
        <label>4</label>
    </ligand>
</feature>
<feature type="binding site" evidence="1">
    <location>
        <position position="271"/>
    </location>
    <ligand>
        <name>[4Fe-4S] cluster</name>
        <dbReference type="ChEBI" id="CHEBI:49883"/>
        <label>4</label>
    </ligand>
</feature>
<feature type="binding site" evidence="1">
    <location>
        <position position="299"/>
    </location>
    <ligand>
        <name>[4Fe-4S] cluster</name>
        <dbReference type="ChEBI" id="CHEBI:49883"/>
        <label>4</label>
    </ligand>
</feature>
<dbReference type="EC" id="1.17.1.9"/>
<dbReference type="EMBL" id="AP006716">
    <property type="protein sequence ID" value="BAE04057.1"/>
    <property type="molecule type" value="Genomic_DNA"/>
</dbReference>
<dbReference type="SMR" id="Q4L8G8"/>
<dbReference type="KEGG" id="sha:SH0748"/>
<dbReference type="eggNOG" id="COG3383">
    <property type="taxonomic scope" value="Bacteria"/>
</dbReference>
<dbReference type="HOGENOM" id="CLU_000422_2_2_9"/>
<dbReference type="OrthoDB" id="9805142at2"/>
<dbReference type="Proteomes" id="UP000000543">
    <property type="component" value="Chromosome"/>
</dbReference>
<dbReference type="GO" id="GO:0016020">
    <property type="term" value="C:membrane"/>
    <property type="evidence" value="ECO:0007669"/>
    <property type="project" value="TreeGrafter"/>
</dbReference>
<dbReference type="GO" id="GO:0051537">
    <property type="term" value="F:2 iron, 2 sulfur cluster binding"/>
    <property type="evidence" value="ECO:0007669"/>
    <property type="project" value="UniProtKB-KW"/>
</dbReference>
<dbReference type="GO" id="GO:0051539">
    <property type="term" value="F:4 iron, 4 sulfur cluster binding"/>
    <property type="evidence" value="ECO:0007669"/>
    <property type="project" value="UniProtKB-KW"/>
</dbReference>
<dbReference type="GO" id="GO:0008863">
    <property type="term" value="F:formate dehydrogenase (NAD+) activity"/>
    <property type="evidence" value="ECO:0007669"/>
    <property type="project" value="UniProtKB-EC"/>
</dbReference>
<dbReference type="GO" id="GO:0046872">
    <property type="term" value="F:metal ion binding"/>
    <property type="evidence" value="ECO:0007669"/>
    <property type="project" value="UniProtKB-KW"/>
</dbReference>
<dbReference type="GO" id="GO:0043546">
    <property type="term" value="F:molybdopterin cofactor binding"/>
    <property type="evidence" value="ECO:0007669"/>
    <property type="project" value="InterPro"/>
</dbReference>
<dbReference type="GO" id="GO:0003954">
    <property type="term" value="F:NADH dehydrogenase activity"/>
    <property type="evidence" value="ECO:0007669"/>
    <property type="project" value="TreeGrafter"/>
</dbReference>
<dbReference type="GO" id="GO:0015942">
    <property type="term" value="P:formate metabolic process"/>
    <property type="evidence" value="ECO:0007669"/>
    <property type="project" value="InterPro"/>
</dbReference>
<dbReference type="GO" id="GO:0022904">
    <property type="term" value="P:respiratory electron transport chain"/>
    <property type="evidence" value="ECO:0007669"/>
    <property type="project" value="TreeGrafter"/>
</dbReference>
<dbReference type="CDD" id="cd00207">
    <property type="entry name" value="fer2"/>
    <property type="match status" value="1"/>
</dbReference>
<dbReference type="CDD" id="cd02753">
    <property type="entry name" value="MopB_Formate-Dh-H"/>
    <property type="match status" value="1"/>
</dbReference>
<dbReference type="FunFam" id="2.20.25.90:FF:000001">
    <property type="entry name" value="Formate dehydrogenase subunit alpha"/>
    <property type="match status" value="1"/>
</dbReference>
<dbReference type="FunFam" id="3.10.20.740:FF:000003">
    <property type="entry name" value="Formate dehydrogenase subunit alpha"/>
    <property type="match status" value="1"/>
</dbReference>
<dbReference type="FunFam" id="3.40.228.10:FF:000002">
    <property type="entry name" value="Formate dehydrogenase subunit alpha"/>
    <property type="match status" value="1"/>
</dbReference>
<dbReference type="FunFam" id="3.30.70.20:FF:000032">
    <property type="entry name" value="Formate dehydrogenase, alpha subunit"/>
    <property type="match status" value="1"/>
</dbReference>
<dbReference type="FunFam" id="2.40.40.20:FF:000005">
    <property type="entry name" value="Periplasmic nitrate reductase"/>
    <property type="match status" value="1"/>
</dbReference>
<dbReference type="Gene3D" id="2.40.40.20">
    <property type="match status" value="1"/>
</dbReference>
<dbReference type="Gene3D" id="3.10.20.740">
    <property type="match status" value="1"/>
</dbReference>
<dbReference type="Gene3D" id="3.30.70.20">
    <property type="match status" value="1"/>
</dbReference>
<dbReference type="Gene3D" id="3.40.50.740">
    <property type="match status" value="1"/>
</dbReference>
<dbReference type="Gene3D" id="2.20.25.90">
    <property type="entry name" value="ADC-like domains"/>
    <property type="match status" value="1"/>
</dbReference>
<dbReference type="Gene3D" id="3.40.228.10">
    <property type="entry name" value="Dimethylsulfoxide Reductase, domain 2"/>
    <property type="match status" value="1"/>
</dbReference>
<dbReference type="InterPro" id="IPR036010">
    <property type="entry name" value="2Fe-2S_ferredoxin-like_sf"/>
</dbReference>
<dbReference type="InterPro" id="IPR001041">
    <property type="entry name" value="2Fe-2S_ferredoxin-type"/>
</dbReference>
<dbReference type="InterPro" id="IPR017896">
    <property type="entry name" value="4Fe4S_Fe-S-bd"/>
</dbReference>
<dbReference type="InterPro" id="IPR017900">
    <property type="entry name" value="4Fe4S_Fe_S_CS"/>
</dbReference>
<dbReference type="InterPro" id="IPR009010">
    <property type="entry name" value="Asp_de-COase-like_dom_sf"/>
</dbReference>
<dbReference type="InterPro" id="IPR041924">
    <property type="entry name" value="Formate_Dh-H_N"/>
</dbReference>
<dbReference type="InterPro" id="IPR006478">
    <property type="entry name" value="Formate_DH_asu"/>
</dbReference>
<dbReference type="InterPro" id="IPR006657">
    <property type="entry name" value="MoPterin_dinucl-bd_dom"/>
</dbReference>
<dbReference type="InterPro" id="IPR006656">
    <property type="entry name" value="Mopterin_OxRdtase"/>
</dbReference>
<dbReference type="InterPro" id="IPR006963">
    <property type="entry name" value="Mopterin_OxRdtase_4Fe-4S_dom"/>
</dbReference>
<dbReference type="InterPro" id="IPR006655">
    <property type="entry name" value="Mopterin_OxRdtase_prok_CS"/>
</dbReference>
<dbReference type="InterPro" id="IPR027467">
    <property type="entry name" value="MopterinOxRdtase_cofactor_BS"/>
</dbReference>
<dbReference type="InterPro" id="IPR019574">
    <property type="entry name" value="NADH_UbQ_OxRdtase_Gsu_4Fe4S-bd"/>
</dbReference>
<dbReference type="InterPro" id="IPR050123">
    <property type="entry name" value="Prok_molybdopt-oxidoreductase"/>
</dbReference>
<dbReference type="NCBIfam" id="TIGR01591">
    <property type="entry name" value="Fdh-alpha"/>
    <property type="match status" value="1"/>
</dbReference>
<dbReference type="PANTHER" id="PTHR43105:SF14">
    <property type="entry name" value="FORMATE DEHYDROGENASE H"/>
    <property type="match status" value="1"/>
</dbReference>
<dbReference type="PANTHER" id="PTHR43105">
    <property type="entry name" value="RESPIRATORY NITRATE REDUCTASE"/>
    <property type="match status" value="1"/>
</dbReference>
<dbReference type="Pfam" id="PF13510">
    <property type="entry name" value="Fer2_4"/>
    <property type="match status" value="1"/>
</dbReference>
<dbReference type="Pfam" id="PF12838">
    <property type="entry name" value="Fer4_7"/>
    <property type="match status" value="1"/>
</dbReference>
<dbReference type="Pfam" id="PF04879">
    <property type="entry name" value="Molybdop_Fe4S4"/>
    <property type="match status" value="1"/>
</dbReference>
<dbReference type="Pfam" id="PF00384">
    <property type="entry name" value="Molybdopterin"/>
    <property type="match status" value="1"/>
</dbReference>
<dbReference type="Pfam" id="PF01568">
    <property type="entry name" value="Molydop_binding"/>
    <property type="match status" value="1"/>
</dbReference>
<dbReference type="Pfam" id="PF10588">
    <property type="entry name" value="NADH-G_4Fe-4S_3"/>
    <property type="match status" value="1"/>
</dbReference>
<dbReference type="PIRSF" id="PIRSF036643">
    <property type="entry name" value="FDH_alpha"/>
    <property type="match status" value="1"/>
</dbReference>
<dbReference type="SMART" id="SM00926">
    <property type="entry name" value="Molybdop_Fe4S4"/>
    <property type="match status" value="1"/>
</dbReference>
<dbReference type="SMART" id="SM00929">
    <property type="entry name" value="NADH-G_4Fe-4S_3"/>
    <property type="match status" value="1"/>
</dbReference>
<dbReference type="SUPFAM" id="SSF54292">
    <property type="entry name" value="2Fe-2S ferredoxin-like"/>
    <property type="match status" value="1"/>
</dbReference>
<dbReference type="SUPFAM" id="SSF54862">
    <property type="entry name" value="4Fe-4S ferredoxins"/>
    <property type="match status" value="1"/>
</dbReference>
<dbReference type="SUPFAM" id="SSF50692">
    <property type="entry name" value="ADC-like"/>
    <property type="match status" value="1"/>
</dbReference>
<dbReference type="SUPFAM" id="SSF53706">
    <property type="entry name" value="Formate dehydrogenase/DMSO reductase, domains 1-3"/>
    <property type="match status" value="1"/>
</dbReference>
<dbReference type="PROSITE" id="PS51085">
    <property type="entry name" value="2FE2S_FER_2"/>
    <property type="match status" value="1"/>
</dbReference>
<dbReference type="PROSITE" id="PS00198">
    <property type="entry name" value="4FE4S_FER_1"/>
    <property type="match status" value="1"/>
</dbReference>
<dbReference type="PROSITE" id="PS51379">
    <property type="entry name" value="4FE4S_FER_2"/>
    <property type="match status" value="2"/>
</dbReference>
<dbReference type="PROSITE" id="PS51839">
    <property type="entry name" value="4FE4S_HC3"/>
    <property type="match status" value="1"/>
</dbReference>
<dbReference type="PROSITE" id="PS51669">
    <property type="entry name" value="4FE4S_MOW_BIS_MGD"/>
    <property type="match status" value="1"/>
</dbReference>
<dbReference type="PROSITE" id="PS00551">
    <property type="entry name" value="MOLYBDOPTERIN_PROK_1"/>
    <property type="match status" value="1"/>
</dbReference>
<dbReference type="PROSITE" id="PS00932">
    <property type="entry name" value="MOLYBDOPTERIN_PROK_3"/>
    <property type="match status" value="1"/>
</dbReference>